<comment type="function">
    <text evidence="1">Modulates transcription in response to changes in cellular NADH/NAD(+) redox state.</text>
</comment>
<comment type="subunit">
    <text evidence="1">Homodimer.</text>
</comment>
<comment type="subcellular location">
    <subcellularLocation>
        <location evidence="1">Cytoplasm</location>
    </subcellularLocation>
</comment>
<comment type="similarity">
    <text evidence="1">Belongs to the transcriptional regulatory Rex family.</text>
</comment>
<evidence type="ECO:0000255" key="1">
    <source>
        <dbReference type="HAMAP-Rule" id="MF_01131"/>
    </source>
</evidence>
<reference key="1">
    <citation type="journal article" date="2003" name="Proc. Natl. Acad. Sci. U.S.A.">
        <title>The genome sequence of Clostridium tetani, the causative agent of tetanus disease.</title>
        <authorList>
            <person name="Brueggemann H."/>
            <person name="Baeumer S."/>
            <person name="Fricke W.F."/>
            <person name="Wiezer A."/>
            <person name="Liesegang H."/>
            <person name="Decker I."/>
            <person name="Herzberg C."/>
            <person name="Martinez-Arias R."/>
            <person name="Merkl R."/>
            <person name="Henne A."/>
            <person name="Gottschalk G."/>
        </authorList>
    </citation>
    <scope>NUCLEOTIDE SEQUENCE [LARGE SCALE GENOMIC DNA]</scope>
    <source>
        <strain>Massachusetts / E88</strain>
    </source>
</reference>
<name>REX_CLOTE</name>
<keyword id="KW-0963">Cytoplasm</keyword>
<keyword id="KW-0238">DNA-binding</keyword>
<keyword id="KW-0520">NAD</keyword>
<keyword id="KW-1185">Reference proteome</keyword>
<keyword id="KW-0678">Repressor</keyword>
<keyword id="KW-0804">Transcription</keyword>
<keyword id="KW-0805">Transcription regulation</keyword>
<accession>Q891F1</accession>
<organism>
    <name type="scientific">Clostridium tetani (strain Massachusetts / E88)</name>
    <dbReference type="NCBI Taxonomy" id="212717"/>
    <lineage>
        <taxon>Bacteria</taxon>
        <taxon>Bacillati</taxon>
        <taxon>Bacillota</taxon>
        <taxon>Clostridia</taxon>
        <taxon>Eubacteriales</taxon>
        <taxon>Clostridiaceae</taxon>
        <taxon>Clostridium</taxon>
    </lineage>
</organism>
<sequence>MDKKRNISMAVIKRLPKYHRYLEELLRNEVDRISSKELSKKIGFTASQIRQDFNCFGDFGQQGYGYNVKELHAQISNILGLTKEYRCIILGGGNIGQAIANYNKFEKLGFRLEAIFDINPKLVGLKIRDIEIKDIDTLEDYLKENNVDVGIICVPSRSAQKVCDILTRNNVKGIWNFAPVDLKVPEGVFTENVHLSENLLTLSYLMNEQEE</sequence>
<feature type="chain" id="PRO_0000097889" description="Redox-sensing transcriptional repressor Rex">
    <location>
        <begin position="1"/>
        <end position="211"/>
    </location>
</feature>
<feature type="DNA-binding region" description="H-T-H motif" evidence="1">
    <location>
        <begin position="17"/>
        <end position="56"/>
    </location>
</feature>
<feature type="binding site" evidence="1">
    <location>
        <begin position="91"/>
        <end position="96"/>
    </location>
    <ligand>
        <name>NAD(+)</name>
        <dbReference type="ChEBI" id="CHEBI:57540"/>
    </ligand>
</feature>
<proteinExistence type="inferred from homology"/>
<gene>
    <name evidence="1" type="primary">rex</name>
    <name type="ordered locus">CTC_02428</name>
</gene>
<dbReference type="EMBL" id="AE015927">
    <property type="protein sequence ID" value="AAO36894.1"/>
    <property type="molecule type" value="Genomic_DNA"/>
</dbReference>
<dbReference type="RefSeq" id="WP_011100555.1">
    <property type="nucleotide sequence ID" value="NC_004557.1"/>
</dbReference>
<dbReference type="SMR" id="Q891F1"/>
<dbReference type="STRING" id="212717.CTC_02428"/>
<dbReference type="GeneID" id="24255126"/>
<dbReference type="KEGG" id="ctc:CTC_02428"/>
<dbReference type="HOGENOM" id="CLU_061534_1_0_9"/>
<dbReference type="OrthoDB" id="9784760at2"/>
<dbReference type="Proteomes" id="UP000001412">
    <property type="component" value="Chromosome"/>
</dbReference>
<dbReference type="GO" id="GO:0005737">
    <property type="term" value="C:cytoplasm"/>
    <property type="evidence" value="ECO:0007669"/>
    <property type="project" value="UniProtKB-SubCell"/>
</dbReference>
<dbReference type="GO" id="GO:0003677">
    <property type="term" value="F:DNA binding"/>
    <property type="evidence" value="ECO:0007669"/>
    <property type="project" value="UniProtKB-UniRule"/>
</dbReference>
<dbReference type="GO" id="GO:0003700">
    <property type="term" value="F:DNA-binding transcription factor activity"/>
    <property type="evidence" value="ECO:0007669"/>
    <property type="project" value="UniProtKB-UniRule"/>
</dbReference>
<dbReference type="GO" id="GO:0045892">
    <property type="term" value="P:negative regulation of DNA-templated transcription"/>
    <property type="evidence" value="ECO:0007669"/>
    <property type="project" value="InterPro"/>
</dbReference>
<dbReference type="GO" id="GO:0051775">
    <property type="term" value="P:response to redox state"/>
    <property type="evidence" value="ECO:0007669"/>
    <property type="project" value="InterPro"/>
</dbReference>
<dbReference type="Gene3D" id="3.40.50.720">
    <property type="entry name" value="NAD(P)-binding Rossmann-like Domain"/>
    <property type="match status" value="1"/>
</dbReference>
<dbReference type="Gene3D" id="1.10.10.10">
    <property type="entry name" value="Winged helix-like DNA-binding domain superfamily/Winged helix DNA-binding domain"/>
    <property type="match status" value="1"/>
</dbReference>
<dbReference type="HAMAP" id="MF_01131">
    <property type="entry name" value="Rex"/>
    <property type="match status" value="1"/>
</dbReference>
<dbReference type="InterPro" id="IPR003781">
    <property type="entry name" value="CoA-bd"/>
</dbReference>
<dbReference type="InterPro" id="IPR036291">
    <property type="entry name" value="NAD(P)-bd_dom_sf"/>
</dbReference>
<dbReference type="InterPro" id="IPR009718">
    <property type="entry name" value="Rex_DNA-bd_C_dom"/>
</dbReference>
<dbReference type="InterPro" id="IPR022876">
    <property type="entry name" value="Tscrpt_rep_Rex"/>
</dbReference>
<dbReference type="InterPro" id="IPR036388">
    <property type="entry name" value="WH-like_DNA-bd_sf"/>
</dbReference>
<dbReference type="InterPro" id="IPR036390">
    <property type="entry name" value="WH_DNA-bd_sf"/>
</dbReference>
<dbReference type="NCBIfam" id="NF003989">
    <property type="entry name" value="PRK05472.1-3"/>
    <property type="match status" value="1"/>
</dbReference>
<dbReference type="NCBIfam" id="NF003990">
    <property type="entry name" value="PRK05472.1-4"/>
    <property type="match status" value="1"/>
</dbReference>
<dbReference type="NCBIfam" id="NF003993">
    <property type="entry name" value="PRK05472.2-2"/>
    <property type="match status" value="1"/>
</dbReference>
<dbReference type="NCBIfam" id="NF003994">
    <property type="entry name" value="PRK05472.2-3"/>
    <property type="match status" value="1"/>
</dbReference>
<dbReference type="NCBIfam" id="NF003995">
    <property type="entry name" value="PRK05472.2-4"/>
    <property type="match status" value="1"/>
</dbReference>
<dbReference type="NCBIfam" id="NF003996">
    <property type="entry name" value="PRK05472.2-5"/>
    <property type="match status" value="1"/>
</dbReference>
<dbReference type="PANTHER" id="PTHR35786">
    <property type="entry name" value="REDOX-SENSING TRANSCRIPTIONAL REPRESSOR REX"/>
    <property type="match status" value="1"/>
</dbReference>
<dbReference type="PANTHER" id="PTHR35786:SF1">
    <property type="entry name" value="REDOX-SENSING TRANSCRIPTIONAL REPRESSOR REX 1"/>
    <property type="match status" value="1"/>
</dbReference>
<dbReference type="Pfam" id="PF02629">
    <property type="entry name" value="CoA_binding"/>
    <property type="match status" value="1"/>
</dbReference>
<dbReference type="Pfam" id="PF06971">
    <property type="entry name" value="Put_DNA-bind_N"/>
    <property type="match status" value="1"/>
</dbReference>
<dbReference type="SMART" id="SM00881">
    <property type="entry name" value="CoA_binding"/>
    <property type="match status" value="1"/>
</dbReference>
<dbReference type="SUPFAM" id="SSF51735">
    <property type="entry name" value="NAD(P)-binding Rossmann-fold domains"/>
    <property type="match status" value="1"/>
</dbReference>
<dbReference type="SUPFAM" id="SSF46785">
    <property type="entry name" value="Winged helix' DNA-binding domain"/>
    <property type="match status" value="1"/>
</dbReference>
<protein>
    <recommendedName>
        <fullName evidence="1">Redox-sensing transcriptional repressor Rex</fullName>
    </recommendedName>
</protein>